<protein>
    <recommendedName>
        <fullName evidence="1">Probable flagellum biosynthesis repressor protein FlbT</fullName>
    </recommendedName>
</protein>
<organism>
    <name type="scientific">Brucella melitensis biotype 2 (strain ATCC 23457)</name>
    <dbReference type="NCBI Taxonomy" id="546272"/>
    <lineage>
        <taxon>Bacteria</taxon>
        <taxon>Pseudomonadati</taxon>
        <taxon>Pseudomonadota</taxon>
        <taxon>Alphaproteobacteria</taxon>
        <taxon>Hyphomicrobiales</taxon>
        <taxon>Brucellaceae</taxon>
        <taxon>Brucella/Ochrobactrum group</taxon>
        <taxon>Brucella</taxon>
    </lineage>
</organism>
<proteinExistence type="inferred from homology"/>
<keyword id="KW-1005">Bacterial flagellum biogenesis</keyword>
<keyword id="KW-0678">Repressor</keyword>
<keyword id="KW-0694">RNA-binding</keyword>
<reference key="1">
    <citation type="submission" date="2009-03" db="EMBL/GenBank/DDBJ databases">
        <title>Brucella melitensis ATCC 23457 whole genome shotgun sequencing project.</title>
        <authorList>
            <person name="Setubal J.C."/>
            <person name="Boyle S."/>
            <person name="Crasta O.R."/>
            <person name="Gillespie J.J."/>
            <person name="Kenyon R.W."/>
            <person name="Lu J."/>
            <person name="Mane S."/>
            <person name="Nagrani S."/>
            <person name="Shallom J.M."/>
            <person name="Shallom S."/>
            <person name="Shukla M."/>
            <person name="Snyder E.E."/>
            <person name="Sobral B.W."/>
            <person name="Wattam A.R."/>
            <person name="Will R."/>
            <person name="Williams K."/>
            <person name="Yoo H."/>
            <person name="Munk C."/>
            <person name="Tapia R."/>
            <person name="Han C."/>
            <person name="Detter J.C."/>
            <person name="Bruce D."/>
            <person name="Brettin T.S."/>
        </authorList>
    </citation>
    <scope>NUCLEOTIDE SEQUENCE [LARGE SCALE GENOMIC DNA]</scope>
    <source>
        <strain>ATCC 23457</strain>
    </source>
</reference>
<gene>
    <name evidence="1" type="primary">flbT</name>
    <name type="ordered locus">BMEA_B1129</name>
</gene>
<evidence type="ECO:0000255" key="1">
    <source>
        <dbReference type="HAMAP-Rule" id="MF_00783"/>
    </source>
</evidence>
<dbReference type="EMBL" id="CP001489">
    <property type="protein sequence ID" value="ACO02899.1"/>
    <property type="molecule type" value="Genomic_DNA"/>
</dbReference>
<dbReference type="RefSeq" id="WP_004680988.1">
    <property type="nucleotide sequence ID" value="NC_012442.1"/>
</dbReference>
<dbReference type="GeneID" id="97535830"/>
<dbReference type="KEGG" id="bmi:BMEA_B1129"/>
<dbReference type="HOGENOM" id="CLU_130913_1_0_5"/>
<dbReference type="Proteomes" id="UP000001748">
    <property type="component" value="Chromosome II"/>
</dbReference>
<dbReference type="GO" id="GO:0048027">
    <property type="term" value="F:mRNA 5'-UTR binding"/>
    <property type="evidence" value="ECO:0007669"/>
    <property type="project" value="UniProtKB-UniRule"/>
</dbReference>
<dbReference type="GO" id="GO:0044781">
    <property type="term" value="P:bacterial-type flagellum organization"/>
    <property type="evidence" value="ECO:0007669"/>
    <property type="project" value="UniProtKB-KW"/>
</dbReference>
<dbReference type="GO" id="GO:0006402">
    <property type="term" value="P:mRNA catabolic process"/>
    <property type="evidence" value="ECO:0007669"/>
    <property type="project" value="InterPro"/>
</dbReference>
<dbReference type="GO" id="GO:1902209">
    <property type="term" value="P:negative regulation of bacterial-type flagellum assembly"/>
    <property type="evidence" value="ECO:0007669"/>
    <property type="project" value="UniProtKB-UniRule"/>
</dbReference>
<dbReference type="HAMAP" id="MF_00783">
    <property type="entry name" value="FlbT"/>
    <property type="match status" value="1"/>
</dbReference>
<dbReference type="InterPro" id="IPR009967">
    <property type="entry name" value="Flagellum_FlbT"/>
</dbReference>
<dbReference type="NCBIfam" id="NF001995">
    <property type="entry name" value="PRK00794.1-1"/>
    <property type="match status" value="1"/>
</dbReference>
<dbReference type="Pfam" id="PF07378">
    <property type="entry name" value="FlbT"/>
    <property type="match status" value="1"/>
</dbReference>
<dbReference type="PIRSF" id="PIRSF009533">
    <property type="entry name" value="FlbT"/>
    <property type="match status" value="1"/>
</dbReference>
<sequence>MAANSKTAIRLSLRAGERIFINGAVLRADRKVSLELLNDATFLLENHVLQPEDTTTPLRQLYFAAQMMLIEPAMREQAGATFAQMLKGMFATFKDAEILNALKLVDELVHNGRVFEALKTIRAQYPREAELMGAQPVVWPVTKSGKSAGANP</sequence>
<name>FLBT_BRUMB</name>
<accession>C0RMR6</accession>
<feature type="chain" id="PRO_1000148470" description="Probable flagellum biosynthesis repressor protein FlbT">
    <location>
        <begin position="1"/>
        <end position="152"/>
    </location>
</feature>
<comment type="function">
    <text evidence="1">Has a post-transcriptional repressor function in flagellum biogenesis. Associates with the 5'-UTR of fljK mRNA and promotes its degradation.</text>
</comment>
<comment type="similarity">
    <text evidence="1">Belongs to the FlbT family.</text>
</comment>